<protein>
    <recommendedName>
        <fullName evidence="1">Probable dual-specificity RNA methyltransferase RlmN</fullName>
        <ecNumber evidence="1">2.1.1.192</ecNumber>
    </recommendedName>
    <alternativeName>
        <fullName evidence="1">23S rRNA (adenine(2503)-C(2))-methyltransferase</fullName>
    </alternativeName>
    <alternativeName>
        <fullName evidence="1">23S rRNA m2A2503 methyltransferase</fullName>
    </alternativeName>
    <alternativeName>
        <fullName evidence="1">Ribosomal RNA large subunit methyltransferase N</fullName>
    </alternativeName>
    <alternativeName>
        <fullName evidence="1">tRNA (adenine(37)-C(2))-methyltransferase</fullName>
    </alternativeName>
    <alternativeName>
        <fullName evidence="1">tRNA m2A37 methyltransferase</fullName>
    </alternativeName>
</protein>
<sequence>MITAEKKKKNKFLPNFDKQSIYSLRFDEMQNWLVEQGQQKFRAKQIFEWLYQKRVDSIDEMTNLSKDLRQLLKDNFTVTTLTTVVKQESKDGTIKFLFELQDGYTIETVLMRHDYGNSVCVTTQVGCRIGCTFCASTLGGLKRNLEAGEIVSQVLTVQKALDATEERVSQIVIMGIGEPFENYDEMMDFLRIVNDDNSLNIGARHITVSTSGIIPRIYDFADEDIQINFAVSLHAAKDEVRSRLMPINRAYNVEKLIEAIQYYQEKTNRRVTFEYGLFGGVNDQLEHARELAHLIKGLNCHVNLIPVNHVPERNYVKTAKNDIFKFEKELKRLGINATIRREQGSDIDAACGQLRAKERQVETR</sequence>
<comment type="function">
    <text evidence="1">Specifically methylates position 2 of adenine 2503 in 23S rRNA and position 2 of adenine 37 in tRNAs. Confers resistance to some classes of antibiotics.</text>
</comment>
<comment type="catalytic activity">
    <reaction evidence="1">
        <text>adenosine(2503) in 23S rRNA + 2 reduced [2Fe-2S]-[ferredoxin] + 2 S-adenosyl-L-methionine = 2-methyladenosine(2503) in 23S rRNA + 5'-deoxyadenosine + L-methionine + 2 oxidized [2Fe-2S]-[ferredoxin] + S-adenosyl-L-homocysteine</text>
        <dbReference type="Rhea" id="RHEA:42916"/>
        <dbReference type="Rhea" id="RHEA-COMP:10000"/>
        <dbReference type="Rhea" id="RHEA-COMP:10001"/>
        <dbReference type="Rhea" id="RHEA-COMP:10152"/>
        <dbReference type="Rhea" id="RHEA-COMP:10282"/>
        <dbReference type="ChEBI" id="CHEBI:17319"/>
        <dbReference type="ChEBI" id="CHEBI:33737"/>
        <dbReference type="ChEBI" id="CHEBI:33738"/>
        <dbReference type="ChEBI" id="CHEBI:57844"/>
        <dbReference type="ChEBI" id="CHEBI:57856"/>
        <dbReference type="ChEBI" id="CHEBI:59789"/>
        <dbReference type="ChEBI" id="CHEBI:74411"/>
        <dbReference type="ChEBI" id="CHEBI:74497"/>
        <dbReference type="EC" id="2.1.1.192"/>
    </reaction>
</comment>
<comment type="catalytic activity">
    <reaction evidence="1">
        <text>adenosine(37) in tRNA + 2 reduced [2Fe-2S]-[ferredoxin] + 2 S-adenosyl-L-methionine = 2-methyladenosine(37) in tRNA + 5'-deoxyadenosine + L-methionine + 2 oxidized [2Fe-2S]-[ferredoxin] + S-adenosyl-L-homocysteine</text>
        <dbReference type="Rhea" id="RHEA:43332"/>
        <dbReference type="Rhea" id="RHEA-COMP:10000"/>
        <dbReference type="Rhea" id="RHEA-COMP:10001"/>
        <dbReference type="Rhea" id="RHEA-COMP:10162"/>
        <dbReference type="Rhea" id="RHEA-COMP:10485"/>
        <dbReference type="ChEBI" id="CHEBI:17319"/>
        <dbReference type="ChEBI" id="CHEBI:33737"/>
        <dbReference type="ChEBI" id="CHEBI:33738"/>
        <dbReference type="ChEBI" id="CHEBI:57844"/>
        <dbReference type="ChEBI" id="CHEBI:57856"/>
        <dbReference type="ChEBI" id="CHEBI:59789"/>
        <dbReference type="ChEBI" id="CHEBI:74411"/>
        <dbReference type="ChEBI" id="CHEBI:74497"/>
        <dbReference type="EC" id="2.1.1.192"/>
    </reaction>
</comment>
<comment type="cofactor">
    <cofactor evidence="1">
        <name>[4Fe-4S] cluster</name>
        <dbReference type="ChEBI" id="CHEBI:49883"/>
    </cofactor>
    <text evidence="1">Binds 1 [4Fe-4S] cluster. The cluster is coordinated with 3 cysteines and an exchangeable S-adenosyl-L-methionine.</text>
</comment>
<comment type="subcellular location">
    <subcellularLocation>
        <location evidence="1">Cytoplasm</location>
    </subcellularLocation>
</comment>
<comment type="miscellaneous">
    <text evidence="1">Reaction proceeds by a ping-pong mechanism involving intermediate methylation of a conserved cysteine residue.</text>
</comment>
<comment type="similarity">
    <text evidence="1">Belongs to the radical SAM superfamily. RlmN family.</text>
</comment>
<gene>
    <name evidence="1" type="primary">rlmN</name>
    <name type="ordered locus">SAR1194</name>
</gene>
<evidence type="ECO:0000255" key="1">
    <source>
        <dbReference type="HAMAP-Rule" id="MF_01849"/>
    </source>
</evidence>
<evidence type="ECO:0000255" key="2">
    <source>
        <dbReference type="PROSITE-ProRule" id="PRU01266"/>
    </source>
</evidence>
<accession>Q6GHL7</accession>
<dbReference type="EC" id="2.1.1.192" evidence="1"/>
<dbReference type="EMBL" id="BX571856">
    <property type="protein sequence ID" value="CAG40196.1"/>
    <property type="molecule type" value="Genomic_DNA"/>
</dbReference>
<dbReference type="RefSeq" id="WP_000626897.1">
    <property type="nucleotide sequence ID" value="NC_002952.2"/>
</dbReference>
<dbReference type="SMR" id="Q6GHL7"/>
<dbReference type="KEGG" id="sar:SAR1194"/>
<dbReference type="HOGENOM" id="CLU_029101_0_1_9"/>
<dbReference type="Proteomes" id="UP000000596">
    <property type="component" value="Chromosome"/>
</dbReference>
<dbReference type="GO" id="GO:0005737">
    <property type="term" value="C:cytoplasm"/>
    <property type="evidence" value="ECO:0007669"/>
    <property type="project" value="UniProtKB-SubCell"/>
</dbReference>
<dbReference type="GO" id="GO:0051539">
    <property type="term" value="F:4 iron, 4 sulfur cluster binding"/>
    <property type="evidence" value="ECO:0007669"/>
    <property type="project" value="UniProtKB-UniRule"/>
</dbReference>
<dbReference type="GO" id="GO:0046872">
    <property type="term" value="F:metal ion binding"/>
    <property type="evidence" value="ECO:0007669"/>
    <property type="project" value="UniProtKB-KW"/>
</dbReference>
<dbReference type="GO" id="GO:0070040">
    <property type="term" value="F:rRNA (adenine(2503)-C2-)-methyltransferase activity"/>
    <property type="evidence" value="ECO:0007669"/>
    <property type="project" value="UniProtKB-UniRule"/>
</dbReference>
<dbReference type="GO" id="GO:0019843">
    <property type="term" value="F:rRNA binding"/>
    <property type="evidence" value="ECO:0007669"/>
    <property type="project" value="UniProtKB-UniRule"/>
</dbReference>
<dbReference type="GO" id="GO:0002935">
    <property type="term" value="F:tRNA (adenine(37)-C2)-methyltransferase activity"/>
    <property type="evidence" value="ECO:0007669"/>
    <property type="project" value="UniProtKB-UniRule"/>
</dbReference>
<dbReference type="GO" id="GO:0000049">
    <property type="term" value="F:tRNA binding"/>
    <property type="evidence" value="ECO:0007669"/>
    <property type="project" value="UniProtKB-UniRule"/>
</dbReference>
<dbReference type="GO" id="GO:0046677">
    <property type="term" value="P:response to antibiotic"/>
    <property type="evidence" value="ECO:0007669"/>
    <property type="project" value="UniProtKB-KW"/>
</dbReference>
<dbReference type="GO" id="GO:0070475">
    <property type="term" value="P:rRNA base methylation"/>
    <property type="evidence" value="ECO:0007669"/>
    <property type="project" value="UniProtKB-UniRule"/>
</dbReference>
<dbReference type="GO" id="GO:0030488">
    <property type="term" value="P:tRNA methylation"/>
    <property type="evidence" value="ECO:0007669"/>
    <property type="project" value="UniProtKB-UniRule"/>
</dbReference>
<dbReference type="CDD" id="cd01335">
    <property type="entry name" value="Radical_SAM"/>
    <property type="match status" value="1"/>
</dbReference>
<dbReference type="FunFam" id="1.10.150.530:FF:000002">
    <property type="entry name" value="Probable dual-specificity RNA methyltransferase RlmN"/>
    <property type="match status" value="1"/>
</dbReference>
<dbReference type="FunFam" id="3.20.20.70:FF:000014">
    <property type="entry name" value="Probable dual-specificity RNA methyltransferase RlmN"/>
    <property type="match status" value="1"/>
</dbReference>
<dbReference type="Gene3D" id="1.10.150.530">
    <property type="match status" value="1"/>
</dbReference>
<dbReference type="Gene3D" id="3.20.20.70">
    <property type="entry name" value="Aldolase class I"/>
    <property type="match status" value="1"/>
</dbReference>
<dbReference type="HAMAP" id="MF_01849">
    <property type="entry name" value="RNA_methyltr_RlmN"/>
    <property type="match status" value="1"/>
</dbReference>
<dbReference type="InterPro" id="IPR013785">
    <property type="entry name" value="Aldolase_TIM"/>
</dbReference>
<dbReference type="InterPro" id="IPR040072">
    <property type="entry name" value="Methyltransferase_A"/>
</dbReference>
<dbReference type="InterPro" id="IPR048641">
    <property type="entry name" value="RlmN_N"/>
</dbReference>
<dbReference type="InterPro" id="IPR027492">
    <property type="entry name" value="RNA_MTrfase_RlmN"/>
</dbReference>
<dbReference type="InterPro" id="IPR004383">
    <property type="entry name" value="rRNA_lsu_MTrfase_RlmN/Cfr"/>
</dbReference>
<dbReference type="InterPro" id="IPR007197">
    <property type="entry name" value="rSAM"/>
</dbReference>
<dbReference type="NCBIfam" id="TIGR00048">
    <property type="entry name" value="rRNA_mod_RlmN"/>
    <property type="match status" value="1"/>
</dbReference>
<dbReference type="PANTHER" id="PTHR30544">
    <property type="entry name" value="23S RRNA METHYLTRANSFERASE"/>
    <property type="match status" value="1"/>
</dbReference>
<dbReference type="PANTHER" id="PTHR30544:SF5">
    <property type="entry name" value="RADICAL SAM CORE DOMAIN-CONTAINING PROTEIN"/>
    <property type="match status" value="1"/>
</dbReference>
<dbReference type="Pfam" id="PF04055">
    <property type="entry name" value="Radical_SAM"/>
    <property type="match status" value="1"/>
</dbReference>
<dbReference type="Pfam" id="PF21016">
    <property type="entry name" value="RlmN_N"/>
    <property type="match status" value="1"/>
</dbReference>
<dbReference type="PIRSF" id="PIRSF006004">
    <property type="entry name" value="CHP00048"/>
    <property type="match status" value="1"/>
</dbReference>
<dbReference type="SFLD" id="SFLDF00275">
    <property type="entry name" value="adenosine_C2_methyltransferase"/>
    <property type="match status" value="1"/>
</dbReference>
<dbReference type="SFLD" id="SFLDG01062">
    <property type="entry name" value="methyltransferase_(Class_A)"/>
    <property type="match status" value="1"/>
</dbReference>
<dbReference type="SUPFAM" id="SSF102114">
    <property type="entry name" value="Radical SAM enzymes"/>
    <property type="match status" value="1"/>
</dbReference>
<dbReference type="PROSITE" id="PS51918">
    <property type="entry name" value="RADICAL_SAM"/>
    <property type="match status" value="1"/>
</dbReference>
<proteinExistence type="inferred from homology"/>
<organism>
    <name type="scientific">Staphylococcus aureus (strain MRSA252)</name>
    <dbReference type="NCBI Taxonomy" id="282458"/>
    <lineage>
        <taxon>Bacteria</taxon>
        <taxon>Bacillati</taxon>
        <taxon>Bacillota</taxon>
        <taxon>Bacilli</taxon>
        <taxon>Bacillales</taxon>
        <taxon>Staphylococcaceae</taxon>
        <taxon>Staphylococcus</taxon>
    </lineage>
</organism>
<name>RLMN_STAAR</name>
<feature type="chain" id="PRO_0000350431" description="Probable dual-specificity RNA methyltransferase RlmN">
    <location>
        <begin position="1"/>
        <end position="364"/>
    </location>
</feature>
<feature type="domain" description="Radical SAM core" evidence="2">
    <location>
        <begin position="113"/>
        <end position="346"/>
    </location>
</feature>
<feature type="active site" description="Proton acceptor" evidence="1">
    <location>
        <position position="107"/>
    </location>
</feature>
<feature type="active site" description="S-methylcysteine intermediate" evidence="1">
    <location>
        <position position="351"/>
    </location>
</feature>
<feature type="binding site" evidence="1">
    <location>
        <position position="127"/>
    </location>
    <ligand>
        <name>[4Fe-4S] cluster</name>
        <dbReference type="ChEBI" id="CHEBI:49883"/>
        <note>4Fe-4S-S-AdoMet</note>
    </ligand>
</feature>
<feature type="binding site" evidence="1">
    <location>
        <position position="131"/>
    </location>
    <ligand>
        <name>[4Fe-4S] cluster</name>
        <dbReference type="ChEBI" id="CHEBI:49883"/>
        <note>4Fe-4S-S-AdoMet</note>
    </ligand>
</feature>
<feature type="binding site" evidence="1">
    <location>
        <position position="134"/>
    </location>
    <ligand>
        <name>[4Fe-4S] cluster</name>
        <dbReference type="ChEBI" id="CHEBI:49883"/>
        <note>4Fe-4S-S-AdoMet</note>
    </ligand>
</feature>
<feature type="binding site" evidence="1">
    <location>
        <begin position="177"/>
        <end position="178"/>
    </location>
    <ligand>
        <name>S-adenosyl-L-methionine</name>
        <dbReference type="ChEBI" id="CHEBI:59789"/>
    </ligand>
</feature>
<feature type="binding site" evidence="1">
    <location>
        <position position="209"/>
    </location>
    <ligand>
        <name>S-adenosyl-L-methionine</name>
        <dbReference type="ChEBI" id="CHEBI:59789"/>
    </ligand>
</feature>
<feature type="binding site" evidence="1">
    <location>
        <begin position="232"/>
        <end position="234"/>
    </location>
    <ligand>
        <name>S-adenosyl-L-methionine</name>
        <dbReference type="ChEBI" id="CHEBI:59789"/>
    </ligand>
</feature>
<feature type="binding site" evidence="1">
    <location>
        <position position="308"/>
    </location>
    <ligand>
        <name>S-adenosyl-L-methionine</name>
        <dbReference type="ChEBI" id="CHEBI:59789"/>
    </ligand>
</feature>
<feature type="disulfide bond" description="(transient)" evidence="1">
    <location>
        <begin position="120"/>
        <end position="351"/>
    </location>
</feature>
<reference key="1">
    <citation type="journal article" date="2004" name="Proc. Natl. Acad. Sci. U.S.A.">
        <title>Complete genomes of two clinical Staphylococcus aureus strains: evidence for the rapid evolution of virulence and drug resistance.</title>
        <authorList>
            <person name="Holden M.T.G."/>
            <person name="Feil E.J."/>
            <person name="Lindsay J.A."/>
            <person name="Peacock S.J."/>
            <person name="Day N.P.J."/>
            <person name="Enright M.C."/>
            <person name="Foster T.J."/>
            <person name="Moore C.E."/>
            <person name="Hurst L."/>
            <person name="Atkin R."/>
            <person name="Barron A."/>
            <person name="Bason N."/>
            <person name="Bentley S.D."/>
            <person name="Chillingworth C."/>
            <person name="Chillingworth T."/>
            <person name="Churcher C."/>
            <person name="Clark L."/>
            <person name="Corton C."/>
            <person name="Cronin A."/>
            <person name="Doggett J."/>
            <person name="Dowd L."/>
            <person name="Feltwell T."/>
            <person name="Hance Z."/>
            <person name="Harris B."/>
            <person name="Hauser H."/>
            <person name="Holroyd S."/>
            <person name="Jagels K."/>
            <person name="James K.D."/>
            <person name="Lennard N."/>
            <person name="Line A."/>
            <person name="Mayes R."/>
            <person name="Moule S."/>
            <person name="Mungall K."/>
            <person name="Ormond D."/>
            <person name="Quail M.A."/>
            <person name="Rabbinowitsch E."/>
            <person name="Rutherford K.M."/>
            <person name="Sanders M."/>
            <person name="Sharp S."/>
            <person name="Simmonds M."/>
            <person name="Stevens K."/>
            <person name="Whitehead S."/>
            <person name="Barrell B.G."/>
            <person name="Spratt B.G."/>
            <person name="Parkhill J."/>
        </authorList>
    </citation>
    <scope>NUCLEOTIDE SEQUENCE [LARGE SCALE GENOMIC DNA]</scope>
    <source>
        <strain>MRSA252</strain>
    </source>
</reference>
<keyword id="KW-0004">4Fe-4S</keyword>
<keyword id="KW-0046">Antibiotic resistance</keyword>
<keyword id="KW-0963">Cytoplasm</keyword>
<keyword id="KW-1015">Disulfide bond</keyword>
<keyword id="KW-0408">Iron</keyword>
<keyword id="KW-0411">Iron-sulfur</keyword>
<keyword id="KW-0479">Metal-binding</keyword>
<keyword id="KW-0489">Methyltransferase</keyword>
<keyword id="KW-0698">rRNA processing</keyword>
<keyword id="KW-0949">S-adenosyl-L-methionine</keyword>
<keyword id="KW-0808">Transferase</keyword>
<keyword id="KW-0819">tRNA processing</keyword>